<comment type="induction">
    <text>By heat shock, salt stress, oxidative stress, glucose limitation and oxygen limitation.</text>
</comment>
<proteinExistence type="evidence at protein level"/>
<organism>
    <name type="scientific">Bacillus subtilis</name>
    <dbReference type="NCBI Taxonomy" id="1423"/>
    <lineage>
        <taxon>Bacteria</taxon>
        <taxon>Bacillati</taxon>
        <taxon>Bacillota</taxon>
        <taxon>Bacilli</taxon>
        <taxon>Bacillales</taxon>
        <taxon>Bacillaceae</taxon>
        <taxon>Bacillus</taxon>
    </lineage>
</organism>
<sequence length="10" mass="1168">SRDIVSVYDD</sequence>
<feature type="chain" id="PRO_0000050082" description="General stress protein 9">
    <location>
        <begin position="1"/>
        <end position="10" status="greater than"/>
    </location>
</feature>
<feature type="non-terminal residue">
    <location>
        <position position="10"/>
    </location>
</feature>
<keyword id="KW-0903">Direct protein sequencing</keyword>
<keyword id="KW-0346">Stress response</keyword>
<name>GS09_BACIU</name>
<protein>
    <recommendedName>
        <fullName>General stress protein 9</fullName>
        <shortName>GSP9</shortName>
    </recommendedName>
</protein>
<accession>P80243</accession>
<reference key="1">
    <citation type="journal article" date="1994" name="Microbiology">
        <title>Analysis of the induction of general stress proteins of Bacillus subtilis.</title>
        <authorList>
            <person name="Voelker U."/>
            <person name="Engelmann S."/>
            <person name="Maul B."/>
            <person name="Riethdorf S."/>
            <person name="Voelker A."/>
            <person name="Schmid R."/>
            <person name="Mach H."/>
            <person name="Hecker M."/>
        </authorList>
    </citation>
    <scope>PROTEIN SEQUENCE</scope>
    <source>
        <strain>168 / IS58</strain>
    </source>
</reference>